<feature type="chain" id="PRO_0000436295" description="Esterase mokD">
    <location>
        <begin position="1"/>
        <end position="263"/>
    </location>
</feature>
<feature type="active site" description="Charge relay system" evidence="1">
    <location>
        <position position="134"/>
    </location>
</feature>
<feature type="active site" description="Charge relay system" evidence="1">
    <location>
        <position position="208"/>
    </location>
</feature>
<feature type="active site" description="Charge relay system" evidence="1">
    <location>
        <position position="236"/>
    </location>
</feature>
<organism evidence="8">
    <name type="scientific">Monascus pilosus</name>
    <name type="common">Red mold</name>
    <dbReference type="NCBI Taxonomy" id="89488"/>
    <lineage>
        <taxon>Eukaryota</taxon>
        <taxon>Fungi</taxon>
        <taxon>Dikarya</taxon>
        <taxon>Ascomycota</taxon>
        <taxon>Pezizomycotina</taxon>
        <taxon>Eurotiomycetes</taxon>
        <taxon>Eurotiomycetidae</taxon>
        <taxon>Eurotiales</taxon>
        <taxon>Aspergillaceae</taxon>
        <taxon>Monascus</taxon>
    </lineage>
</organism>
<proteinExistence type="evidence at protein level"/>
<protein>
    <recommendedName>
        <fullName evidence="2">Esterase mokD</fullName>
        <ecNumber evidence="2">3.1.2.31</ecNumber>
    </recommendedName>
    <alternativeName>
        <fullName evidence="6">Monacolin K biosynthesis protein D</fullName>
    </alternativeName>
</protein>
<accession>Q3S2U0</accession>
<evidence type="ECO:0000250" key="1">
    <source>
        <dbReference type="UniProtKB" id="P38777"/>
    </source>
</evidence>
<evidence type="ECO:0000250" key="2">
    <source>
        <dbReference type="UniProtKB" id="Q0C8M2"/>
    </source>
</evidence>
<evidence type="ECO:0000269" key="3">
    <source>
    </source>
</evidence>
<evidence type="ECO:0000269" key="4">
    <source>
    </source>
</evidence>
<evidence type="ECO:0000269" key="5">
    <source>
    </source>
</evidence>
<evidence type="ECO:0000303" key="6">
    <source>
    </source>
</evidence>
<evidence type="ECO:0000305" key="7"/>
<evidence type="ECO:0000312" key="8">
    <source>
        <dbReference type="EMBL" id="ABA02242.1"/>
    </source>
</evidence>
<keyword id="KW-0378">Hydrolase</keyword>
<gene>
    <name evidence="6" type="primary">mokD</name>
</gene>
<dbReference type="EC" id="3.1.2.31" evidence="2"/>
<dbReference type="EMBL" id="DQ176595">
    <property type="protein sequence ID" value="ABA02242.1"/>
    <property type="molecule type" value="Genomic_DNA"/>
</dbReference>
<dbReference type="SMR" id="Q3S2U0"/>
<dbReference type="ESTHER" id="monpi-mokd">
    <property type="family name" value="FSH1"/>
</dbReference>
<dbReference type="UniPathway" id="UPA00875"/>
<dbReference type="GO" id="GO:0005737">
    <property type="term" value="C:cytoplasm"/>
    <property type="evidence" value="ECO:0007669"/>
    <property type="project" value="TreeGrafter"/>
</dbReference>
<dbReference type="GO" id="GO:0005634">
    <property type="term" value="C:nucleus"/>
    <property type="evidence" value="ECO:0007669"/>
    <property type="project" value="TreeGrafter"/>
</dbReference>
<dbReference type="GO" id="GO:0016787">
    <property type="term" value="F:hydrolase activity"/>
    <property type="evidence" value="ECO:0007669"/>
    <property type="project" value="UniProtKB-KW"/>
</dbReference>
<dbReference type="GO" id="GO:0044550">
    <property type="term" value="P:secondary metabolite biosynthetic process"/>
    <property type="evidence" value="ECO:0007669"/>
    <property type="project" value="TreeGrafter"/>
</dbReference>
<dbReference type="Gene3D" id="3.40.50.1820">
    <property type="entry name" value="alpha/beta hydrolase"/>
    <property type="match status" value="1"/>
</dbReference>
<dbReference type="InterPro" id="IPR029058">
    <property type="entry name" value="AB_hydrolase_fold"/>
</dbReference>
<dbReference type="InterPro" id="IPR005645">
    <property type="entry name" value="FSH-like_dom"/>
</dbReference>
<dbReference type="InterPro" id="IPR050593">
    <property type="entry name" value="LovG"/>
</dbReference>
<dbReference type="PANTHER" id="PTHR48070:SF3">
    <property type="entry name" value="ESTERASE DBAE-RELATED"/>
    <property type="match status" value="1"/>
</dbReference>
<dbReference type="PANTHER" id="PTHR48070">
    <property type="entry name" value="ESTERASE OVCA2"/>
    <property type="match status" value="1"/>
</dbReference>
<dbReference type="Pfam" id="PF03959">
    <property type="entry name" value="FSH1"/>
    <property type="match status" value="1"/>
</dbReference>
<dbReference type="SUPFAM" id="SSF53474">
    <property type="entry name" value="alpha/beta-Hydrolases"/>
    <property type="match status" value="1"/>
</dbReference>
<sequence>MRIQRTPAPPKAPRALLCVHGAGCSPAIFRVQLSKLRAALREDFEFVYATAPFPSAPGPGILPTFEGLGPYYTWFEGSPSGAAAKGDNSNSNDSNSSPTVHDRLAAVHEPVRRAIAEWQTQNPSIPIVGTVSFSEGALVTALLLWQQQMGRIPWLPVMQVAMFICCWYQHEATQYMREEVGCGGDGGIDGEKLVIRGVLSLHLQGRDDFALAGSKMVVAQHFVPGEAQVLEFAGRHHFPNRPRDVLETVKRFRQLCVRARVIG</sequence>
<name>MOKD_MONPI</name>
<reference key="1">
    <citation type="journal article" date="2008" name="J. Agric. Food Chem.">
        <title>Cloning and characterization of monacolin K biosynthetic gene cluster from Monascus pilosus.</title>
        <authorList>
            <person name="Chen Y.P."/>
            <person name="Tseng C.P."/>
            <person name="Liaw L.L."/>
            <person name="Wang C.L."/>
            <person name="Chen I.C."/>
            <person name="Wu W.J."/>
            <person name="Wu M.D."/>
            <person name="Yuan G.F."/>
        </authorList>
    </citation>
    <scope>NUCLEOTIDE SEQUENCE [GENOMIC DNA]</scope>
    <scope>FUNCTION</scope>
</reference>
<reference key="2">
    <citation type="journal article" date="2009" name="Biotechnol. Lett.">
        <title>Identification of mokB involved in monacolin K biosynthesis in Monascus pilosus.</title>
        <authorList>
            <person name="Sakai K."/>
            <person name="Kinoshita H."/>
            <person name="Nihira T."/>
        </authorList>
    </citation>
    <scope>FUNCTION</scope>
</reference>
<reference key="3">
    <citation type="journal article" date="2010" name="J. Agric. Food Chem.">
        <title>Identification of the mokH gene encoding transcription factor for the upregulation of monacolin K biosynthesis in Monascus pilosus.</title>
        <authorList>
            <person name="Chen Y.-P."/>
            <person name="Yuan G.-F."/>
            <person name="Hsieh S.-Y."/>
            <person name="Lin Y.-S."/>
            <person name="Wang W.-Y."/>
            <person name="Liaw L.-L."/>
            <person name="Tseng C.-P."/>
        </authorList>
    </citation>
    <scope>INDUCTION</scope>
</reference>
<reference key="4">
    <citation type="journal article" date="2011" name="Biosci. Biotechnol. Biochem.">
        <title>Simultaneous enrichment of deglycosylated ginsenosides and monacolin K in red ginseng by fermentation with Monascus pilosus.</title>
        <authorList>
            <person name="Hong S.Y."/>
            <person name="Oh J.H."/>
            <person name="Lee I."/>
        </authorList>
    </citation>
    <scope>BIOTECHNOLOGY</scope>
</reference>
<comment type="function">
    <text evidence="2 3 6">Esterase; part of the gene cluster that mediates the biosynthesis of monakolin K, also known as lovastatin, and which acts as a potent competitive inhibitor of HMG-CoA reductase (PubMed:18578535). Monakolin K biosynthesis is performed in two stages (PubMed:19693441). The first stage is catalyzed by the nonaketide synthase mokA, which belongs to type I polyketide synthases and catalyzes the iterative nine-step formation of the polyketide (PubMed:18578535, PubMed:19693441). This PKS stage completed by the action of dehydrogenase mokE, which catalyzes the NADPH-dependent reduction of the unsaturated tetra-, penta- and heptaketide intermediates that arise during the mokA-mediated biosynthesis of the nonaketide chain and leads to dihydromonacolin L (PubMed:19693441). Covalently bound dihydromonacolin L is released from mokA by the mokD esterase (By similarity). Conversion of dihydromonacolin L into monacolin L and then monacolin J is subsequently performed with the participation of molecular oxygen and P450 monoogygenase mokC (PubMed:19693441). Finally, mokF performs the conversion of monacoline J to monacoline K through the addition of the side-chain diketide moiety (2R)-2-methylbutanoate produced by the diketide synthase mokB (PubMed:19693441).</text>
</comment>
<comment type="catalytic activity">
    <reaction evidence="2">
        <text>dihydromonacolin L-[lovastatin nonaketide synthase] + H2O = holo-[lovastatin nonaketide synthase] + dihydromonacolin L carboxylate + H(+)</text>
        <dbReference type="Rhea" id="RHEA:11592"/>
        <dbReference type="Rhea" id="RHEA-COMP:10042"/>
        <dbReference type="Rhea" id="RHEA-COMP:10043"/>
        <dbReference type="ChEBI" id="CHEBI:15377"/>
        <dbReference type="ChEBI" id="CHEBI:15378"/>
        <dbReference type="ChEBI" id="CHEBI:64479"/>
        <dbReference type="ChEBI" id="CHEBI:79031"/>
        <dbReference type="ChEBI" id="CHEBI:79032"/>
        <dbReference type="EC" id="3.1.2.31"/>
    </reaction>
</comment>
<comment type="pathway">
    <text evidence="2">Polyketide biosynthesis; lovastatin biosynthesis.</text>
</comment>
<comment type="induction">
    <text evidence="4">Expression is controlled by the monacolin K cluster transcription regulator mokH (PubMed:19968298).</text>
</comment>
<comment type="biotechnology">
    <text evidence="5">Monacoline K acts as an inhibitor of HMG-CoA reductase involved in cholesterogenesis (PubMed:21821946). Its hypocholesterolemic activity might be useful for lowering cholesterol levels in the blood and reduce artherosclerosis and coronary heart disease (PubMed:21821946).</text>
</comment>
<comment type="similarity">
    <text evidence="7">Belongs to the LovG family.</text>
</comment>